<evidence type="ECO:0000255" key="1">
    <source>
        <dbReference type="HAMAP-Rule" id="MF_00240"/>
    </source>
</evidence>
<gene>
    <name evidence="1" type="primary">lolA</name>
    <name type="ordered locus">ECH74115_1053</name>
</gene>
<keyword id="KW-0143">Chaperone</keyword>
<keyword id="KW-0574">Periplasm</keyword>
<keyword id="KW-0653">Protein transport</keyword>
<keyword id="KW-0732">Signal</keyword>
<keyword id="KW-0813">Transport</keyword>
<organism>
    <name type="scientific">Escherichia coli O157:H7 (strain EC4115 / EHEC)</name>
    <dbReference type="NCBI Taxonomy" id="444450"/>
    <lineage>
        <taxon>Bacteria</taxon>
        <taxon>Pseudomonadati</taxon>
        <taxon>Pseudomonadota</taxon>
        <taxon>Gammaproteobacteria</taxon>
        <taxon>Enterobacterales</taxon>
        <taxon>Enterobacteriaceae</taxon>
        <taxon>Escherichia</taxon>
    </lineage>
</organism>
<comment type="function">
    <text evidence="1">Participates in the translocation of lipoproteins from the inner membrane to the outer membrane. Only forms a complex with a lipoprotein if the residue after the N-terminal Cys is not an aspartate (The Asp acts as a targeting signal to indicate that the lipoprotein should stay in the inner membrane).</text>
</comment>
<comment type="subunit">
    <text evidence="1">Monomer.</text>
</comment>
<comment type="subcellular location">
    <subcellularLocation>
        <location evidence="1">Periplasm</location>
    </subcellularLocation>
</comment>
<comment type="similarity">
    <text evidence="1">Belongs to the LolA family.</text>
</comment>
<reference key="1">
    <citation type="journal article" date="2011" name="Proc. Natl. Acad. Sci. U.S.A.">
        <title>Genomic anatomy of Escherichia coli O157:H7 outbreaks.</title>
        <authorList>
            <person name="Eppinger M."/>
            <person name="Mammel M.K."/>
            <person name="Leclerc J.E."/>
            <person name="Ravel J."/>
            <person name="Cebula T.A."/>
        </authorList>
    </citation>
    <scope>NUCLEOTIDE SEQUENCE [LARGE SCALE GENOMIC DNA]</scope>
    <source>
        <strain>EC4115 / EHEC</strain>
    </source>
</reference>
<sequence>MKKIAITCALLSSLVASSVWADAASDLKSRLDKVSSFHASFTQKVTDGSGAAVQEGQGDLWVKRPNLFNWHMTQPDESILVSDGKTLWFYNPFVEQATATWLKDATGNTPFMLIARNQSSDWQQYNIKQNGDDFVLTPKASNGNLKQFTINVGRDGTIHQFSAVEQDDQRSSYQLKSQQNGAVDAAKFTFTPPQGVTVDDQRK</sequence>
<name>LOLA_ECO5E</name>
<proteinExistence type="inferred from homology"/>
<accession>B5YT26</accession>
<feature type="signal peptide" evidence="1">
    <location>
        <begin position="1"/>
        <end position="21"/>
    </location>
</feature>
<feature type="chain" id="PRO_1000100716" description="Outer-membrane lipoprotein carrier protein">
    <location>
        <begin position="22"/>
        <end position="203"/>
    </location>
</feature>
<protein>
    <recommendedName>
        <fullName evidence="1">Outer-membrane lipoprotein carrier protein</fullName>
    </recommendedName>
</protein>
<dbReference type="EMBL" id="CP001164">
    <property type="protein sequence ID" value="ACI36733.1"/>
    <property type="molecule type" value="Genomic_DNA"/>
</dbReference>
<dbReference type="RefSeq" id="WP_001295343.1">
    <property type="nucleotide sequence ID" value="NC_011353.1"/>
</dbReference>
<dbReference type="SMR" id="B5YT26"/>
<dbReference type="GeneID" id="93776529"/>
<dbReference type="KEGG" id="ecf:ECH74115_1053"/>
<dbReference type="HOGENOM" id="CLU_087560_1_1_6"/>
<dbReference type="GO" id="GO:0030288">
    <property type="term" value="C:outer membrane-bounded periplasmic space"/>
    <property type="evidence" value="ECO:0007669"/>
    <property type="project" value="TreeGrafter"/>
</dbReference>
<dbReference type="GO" id="GO:0044874">
    <property type="term" value="P:lipoprotein localization to outer membrane"/>
    <property type="evidence" value="ECO:0007669"/>
    <property type="project" value="UniProtKB-UniRule"/>
</dbReference>
<dbReference type="GO" id="GO:0042953">
    <property type="term" value="P:lipoprotein transport"/>
    <property type="evidence" value="ECO:0007669"/>
    <property type="project" value="InterPro"/>
</dbReference>
<dbReference type="CDD" id="cd16325">
    <property type="entry name" value="LolA"/>
    <property type="match status" value="1"/>
</dbReference>
<dbReference type="FunFam" id="2.50.20.10:FF:000001">
    <property type="entry name" value="Outer-membrane lipoprotein carrier protein"/>
    <property type="match status" value="1"/>
</dbReference>
<dbReference type="Gene3D" id="2.50.20.10">
    <property type="entry name" value="Lipoprotein localisation LolA/LolB/LppX"/>
    <property type="match status" value="1"/>
</dbReference>
<dbReference type="HAMAP" id="MF_00240">
    <property type="entry name" value="LolA"/>
    <property type="match status" value="1"/>
</dbReference>
<dbReference type="InterPro" id="IPR029046">
    <property type="entry name" value="LolA/LolB/LppX"/>
</dbReference>
<dbReference type="InterPro" id="IPR004564">
    <property type="entry name" value="OM_lipoprot_carrier_LolA-like"/>
</dbReference>
<dbReference type="InterPro" id="IPR018323">
    <property type="entry name" value="OM_lipoprot_carrier_LolA_Pbac"/>
</dbReference>
<dbReference type="NCBIfam" id="TIGR00547">
    <property type="entry name" value="lolA"/>
    <property type="match status" value="1"/>
</dbReference>
<dbReference type="PANTHER" id="PTHR35869">
    <property type="entry name" value="OUTER-MEMBRANE LIPOPROTEIN CARRIER PROTEIN"/>
    <property type="match status" value="1"/>
</dbReference>
<dbReference type="PANTHER" id="PTHR35869:SF1">
    <property type="entry name" value="OUTER-MEMBRANE LIPOPROTEIN CARRIER PROTEIN"/>
    <property type="match status" value="1"/>
</dbReference>
<dbReference type="Pfam" id="PF03548">
    <property type="entry name" value="LolA"/>
    <property type="match status" value="1"/>
</dbReference>
<dbReference type="SUPFAM" id="SSF89392">
    <property type="entry name" value="Prokaryotic lipoproteins and lipoprotein localization factors"/>
    <property type="match status" value="1"/>
</dbReference>